<organism>
    <name type="scientific">Parvibaculum lavamentivorans (strain DS-1 / DSM 13023 / NCIMB 13966)</name>
    <dbReference type="NCBI Taxonomy" id="402881"/>
    <lineage>
        <taxon>Bacteria</taxon>
        <taxon>Pseudomonadati</taxon>
        <taxon>Pseudomonadota</taxon>
        <taxon>Alphaproteobacteria</taxon>
        <taxon>Hyphomicrobiales</taxon>
        <taxon>Parvibaculaceae</taxon>
        <taxon>Parvibaculum</taxon>
    </lineage>
</organism>
<accession>A7HWQ7</accession>
<feature type="chain" id="PRO_1000072408" description="Small ribosomal subunit protein uS7">
    <location>
        <begin position="1"/>
        <end position="156"/>
    </location>
</feature>
<name>RS7_PARL1</name>
<evidence type="ECO:0000255" key="1">
    <source>
        <dbReference type="HAMAP-Rule" id="MF_00480"/>
    </source>
</evidence>
<evidence type="ECO:0000305" key="2"/>
<reference key="1">
    <citation type="journal article" date="2011" name="Stand. Genomic Sci.">
        <title>Complete genome sequence of Parvibaculum lavamentivorans type strain (DS-1(T)).</title>
        <authorList>
            <person name="Schleheck D."/>
            <person name="Weiss M."/>
            <person name="Pitluck S."/>
            <person name="Bruce D."/>
            <person name="Land M.L."/>
            <person name="Han S."/>
            <person name="Saunders E."/>
            <person name="Tapia R."/>
            <person name="Detter C."/>
            <person name="Brettin T."/>
            <person name="Han J."/>
            <person name="Woyke T."/>
            <person name="Goodwin L."/>
            <person name="Pennacchio L."/>
            <person name="Nolan M."/>
            <person name="Cook A.M."/>
            <person name="Kjelleberg S."/>
            <person name="Thomas T."/>
        </authorList>
    </citation>
    <scope>NUCLEOTIDE SEQUENCE [LARGE SCALE GENOMIC DNA]</scope>
    <source>
        <strain>DS-1 / DSM 13023 / NCIMB 13966</strain>
    </source>
</reference>
<dbReference type="EMBL" id="CP000774">
    <property type="protein sequence ID" value="ABS64340.1"/>
    <property type="molecule type" value="Genomic_DNA"/>
</dbReference>
<dbReference type="RefSeq" id="WP_012111655.1">
    <property type="nucleotide sequence ID" value="NC_009719.1"/>
</dbReference>
<dbReference type="SMR" id="A7HWQ7"/>
<dbReference type="STRING" id="402881.Plav_2732"/>
<dbReference type="KEGG" id="pla:Plav_2732"/>
<dbReference type="eggNOG" id="COG0049">
    <property type="taxonomic scope" value="Bacteria"/>
</dbReference>
<dbReference type="HOGENOM" id="CLU_072226_1_1_5"/>
<dbReference type="OrthoDB" id="9807653at2"/>
<dbReference type="Proteomes" id="UP000006377">
    <property type="component" value="Chromosome"/>
</dbReference>
<dbReference type="GO" id="GO:0015935">
    <property type="term" value="C:small ribosomal subunit"/>
    <property type="evidence" value="ECO:0007669"/>
    <property type="project" value="InterPro"/>
</dbReference>
<dbReference type="GO" id="GO:0019843">
    <property type="term" value="F:rRNA binding"/>
    <property type="evidence" value="ECO:0007669"/>
    <property type="project" value="UniProtKB-UniRule"/>
</dbReference>
<dbReference type="GO" id="GO:0003735">
    <property type="term" value="F:structural constituent of ribosome"/>
    <property type="evidence" value="ECO:0007669"/>
    <property type="project" value="InterPro"/>
</dbReference>
<dbReference type="GO" id="GO:0000049">
    <property type="term" value="F:tRNA binding"/>
    <property type="evidence" value="ECO:0007669"/>
    <property type="project" value="UniProtKB-UniRule"/>
</dbReference>
<dbReference type="GO" id="GO:0006412">
    <property type="term" value="P:translation"/>
    <property type="evidence" value="ECO:0007669"/>
    <property type="project" value="UniProtKB-UniRule"/>
</dbReference>
<dbReference type="CDD" id="cd14869">
    <property type="entry name" value="uS7_Bacteria"/>
    <property type="match status" value="1"/>
</dbReference>
<dbReference type="FunFam" id="1.10.455.10:FF:000001">
    <property type="entry name" value="30S ribosomal protein S7"/>
    <property type="match status" value="1"/>
</dbReference>
<dbReference type="Gene3D" id="1.10.455.10">
    <property type="entry name" value="Ribosomal protein S7 domain"/>
    <property type="match status" value="1"/>
</dbReference>
<dbReference type="HAMAP" id="MF_00480_B">
    <property type="entry name" value="Ribosomal_uS7_B"/>
    <property type="match status" value="1"/>
</dbReference>
<dbReference type="InterPro" id="IPR000235">
    <property type="entry name" value="Ribosomal_uS7"/>
</dbReference>
<dbReference type="InterPro" id="IPR005717">
    <property type="entry name" value="Ribosomal_uS7_bac/org-type"/>
</dbReference>
<dbReference type="InterPro" id="IPR020606">
    <property type="entry name" value="Ribosomal_uS7_CS"/>
</dbReference>
<dbReference type="InterPro" id="IPR023798">
    <property type="entry name" value="Ribosomal_uS7_dom"/>
</dbReference>
<dbReference type="InterPro" id="IPR036823">
    <property type="entry name" value="Ribosomal_uS7_dom_sf"/>
</dbReference>
<dbReference type="NCBIfam" id="TIGR01029">
    <property type="entry name" value="rpsG_bact"/>
    <property type="match status" value="1"/>
</dbReference>
<dbReference type="PANTHER" id="PTHR11205">
    <property type="entry name" value="RIBOSOMAL PROTEIN S7"/>
    <property type="match status" value="1"/>
</dbReference>
<dbReference type="Pfam" id="PF00177">
    <property type="entry name" value="Ribosomal_S7"/>
    <property type="match status" value="1"/>
</dbReference>
<dbReference type="PIRSF" id="PIRSF002122">
    <property type="entry name" value="RPS7p_RPS7a_RPS5e_RPS7o"/>
    <property type="match status" value="1"/>
</dbReference>
<dbReference type="SUPFAM" id="SSF47973">
    <property type="entry name" value="Ribosomal protein S7"/>
    <property type="match status" value="1"/>
</dbReference>
<dbReference type="PROSITE" id="PS00052">
    <property type="entry name" value="RIBOSOMAL_S7"/>
    <property type="match status" value="1"/>
</dbReference>
<proteinExistence type="inferred from homology"/>
<protein>
    <recommendedName>
        <fullName evidence="1">Small ribosomal subunit protein uS7</fullName>
    </recommendedName>
    <alternativeName>
        <fullName evidence="2">30S ribosomal protein S7</fullName>
    </alternativeName>
</protein>
<keyword id="KW-1185">Reference proteome</keyword>
<keyword id="KW-0687">Ribonucleoprotein</keyword>
<keyword id="KW-0689">Ribosomal protein</keyword>
<keyword id="KW-0694">RNA-binding</keyword>
<keyword id="KW-0699">rRNA-binding</keyword>
<keyword id="KW-0820">tRNA-binding</keyword>
<comment type="function">
    <text evidence="1">One of the primary rRNA binding proteins, it binds directly to 16S rRNA where it nucleates assembly of the head domain of the 30S subunit. Is located at the subunit interface close to the decoding center, probably blocks exit of the E-site tRNA.</text>
</comment>
<comment type="subunit">
    <text evidence="1">Part of the 30S ribosomal subunit. Contacts proteins S9 and S11.</text>
</comment>
<comment type="similarity">
    <text evidence="1">Belongs to the universal ribosomal protein uS7 family.</text>
</comment>
<gene>
    <name evidence="1" type="primary">rpsG</name>
    <name type="ordered locus">Plav_2732</name>
</gene>
<sequence length="156" mass="17837">MSRRHRAEKRDVIPDAKYGDVILAKFMNSLMYHGKKSAAETIIYGAFDQMQQKASVDPLRTFHEALENVMPALEVRSRRVGGATYQVPVEVRPDRRRALAIRWIIAAARARNETTMVARLSGELLDAANNRGSAVKKREDTHRMAEANRAFSHYRW</sequence>